<comment type="function">
    <text evidence="1 7 9 10 11 12 13">Substrate-recognition component of the Cul7-RING(FBXW8) ubiquitin ligase complex, which mediates the ubiquitination and subsequent proteasomal degradation of target proteins (PubMed:17205132, PubMed:18498745, PubMed:21572988, PubMed:24362026, PubMed:35982156). The Cul7-RING(FBXW8) complex mediates ubiquitination and consequent degradation of GORASP1, acting as a component of the ubiquitin ligase pathway that regulates Golgi morphogenesis and dendrite patterning in brain (PubMed:21572988). Mediates ubiquitination and degradation of IRS1 in a mTOR-dependent manner: the Cul7-RING(FBXW8) complex recognizes and binds IRS1 previously phosphorylated by S6 kinase (RPS6KB1 or RPS6KB2) (PubMed:18498745). The Cul7-RING(FBXW8) complex also mediates ubiquitination of MAP4K1/HPK1: recognizes and binds autophosphorylated MAP4K1/HPK1, leading to its degradation, thereby affecting cell proliferation and differentiation (PubMed:24362026). The Cul7-RING(FBXW8) complex also mediates ubiquitination of phosphorylated cyclin-D1 (CCND1) (PubMed:17205132). The Cul7-RING(FBXW8) complex is however not a major regulator of CCND1 stability during the G1/S transition (By similarity). Associated component of the 3M complex, suggesting that it mediates some of 3M complex functions (PubMed:24793695).</text>
</comment>
<comment type="pathway">
    <text evidence="7 9">Protein modification; protein ubiquitination.</text>
</comment>
<comment type="subunit">
    <text evidence="1 5 7 8 10 11 12 13">Component of the Cul7-RING(FBXW8) complex consisting of CUL7, RBX1, SKP1 and FBXW8; within the complex interacts with CUL7 and SKP1 (PubMed:12904573, PubMed:17205132, PubMed:17332328, PubMed:21572988, PubMed:24362026, PubMed:35982156). Interacts with GLMN isoform 1 (PubMed:12904573). Interacts with OBSL1, CUL1, CUL2, CCT6B, PFDN5, CCT2, CCT3, CCT6A, CCT7, VBP1, CCDC8, ARF1, TRIP13, PDCD5 and GORASP1 (PubMed:21572988). Interacts with MAP4K1/HPK1 (when autophosphorylated) (PubMed:24362026). Associated component of the 3M complex (PubMed:24793695, PubMed:35982156). Interacts with POUF51 (when phosphorylated on 'Ser-355') (By similarity).</text>
</comment>
<comment type="interaction">
    <interactant intactId="EBI-914770">
        <id>Q8N3Y1</id>
    </interactant>
    <interactant intactId="EBI-447544">
        <id>P01106</id>
        <label>MYC</label>
    </interactant>
    <organismsDiffer>false</organismsDiffer>
    <experiments>3</experiments>
</comment>
<comment type="interaction">
    <interactant intactId="EBI-914770">
        <id>Q8N3Y1</id>
    </interactant>
    <interactant intactId="EBI-307486">
        <id>P63208</id>
        <label>SKP1</label>
    </interactant>
    <organismsDiffer>false</organismsDiffer>
    <experiments>5</experiments>
</comment>
<comment type="interaction">
    <interactant intactId="EBI-15927105">
        <id>Q8N3Y1-2</id>
    </interactant>
    <interactant intactId="EBI-15927064">
        <id>B1WBR1</id>
        <label>Gorasp1</label>
    </interactant>
    <organismsDiffer>true</organismsDiffer>
    <experiments>2</experiments>
</comment>
<comment type="subcellular location">
    <subcellularLocation>
        <location evidence="10">Cytoplasm</location>
        <location evidence="10">Perinuclear region</location>
    </subcellularLocation>
    <subcellularLocation>
        <location evidence="10">Golgi apparatus</location>
    </subcellularLocation>
    <subcellularLocation>
        <location evidence="7">Cytoplasm</location>
    </subcellularLocation>
    <text evidence="1">Localizes to the cytosol when phosphorylated at Ser-85, promoting IRS1 ubiquitination.</text>
</comment>
<comment type="alternative products">
    <event type="alternative splicing"/>
    <isoform>
        <id>Q8N3Y1-1</id>
        <name>1</name>
        <sequence type="displayed"/>
    </isoform>
    <isoform>
        <id>Q8N3Y1-2</id>
        <name>2</name>
        <sequence type="described" ref="VSP_008501"/>
    </isoform>
</comment>
<comment type="PTM">
    <text evidence="1">Phosphorylation at Ser-85 by mTORC2 promotes FBXW8 stabilization, allowing its translocation to the cytosol in response to insulin.</text>
</comment>
<comment type="sequence caution" evidence="16">
    <conflict type="erroneous initiation">
        <sequence resource="EMBL-CDS" id="AAF03129"/>
    </conflict>
    <text>Extended N-terminus.</text>
</comment>
<comment type="sequence caution" evidence="16">
    <conflict type="frameshift">
        <sequence resource="EMBL-CDS" id="AAF03129"/>
    </conflict>
</comment>
<name>FBXW8_HUMAN</name>
<keyword id="KW-0002">3D-structure</keyword>
<keyword id="KW-0007">Acetylation</keyword>
<keyword id="KW-0025">Alternative splicing</keyword>
<keyword id="KW-0963">Cytoplasm</keyword>
<keyword id="KW-0333">Golgi apparatus</keyword>
<keyword id="KW-0597">Phosphoprotein</keyword>
<keyword id="KW-1267">Proteomics identification</keyword>
<keyword id="KW-1185">Reference proteome</keyword>
<keyword id="KW-0677">Repeat</keyword>
<keyword id="KW-0833">Ubl conjugation pathway</keyword>
<keyword id="KW-0853">WD repeat</keyword>
<organism>
    <name type="scientific">Homo sapiens</name>
    <name type="common">Human</name>
    <dbReference type="NCBI Taxonomy" id="9606"/>
    <lineage>
        <taxon>Eukaryota</taxon>
        <taxon>Metazoa</taxon>
        <taxon>Chordata</taxon>
        <taxon>Craniata</taxon>
        <taxon>Vertebrata</taxon>
        <taxon>Euteleostomi</taxon>
        <taxon>Mammalia</taxon>
        <taxon>Eutheria</taxon>
        <taxon>Euarchontoglires</taxon>
        <taxon>Primates</taxon>
        <taxon>Haplorrhini</taxon>
        <taxon>Catarrhini</taxon>
        <taxon>Hominidae</taxon>
        <taxon>Homo</taxon>
    </lineage>
</organism>
<reference key="1">
    <citation type="journal article" date="1999" name="Curr. Biol.">
        <title>A family of mammalian F-box proteins.</title>
        <authorList>
            <person name="Winston J.T."/>
            <person name="Koepp D.M."/>
            <person name="Zhu C."/>
            <person name="Elledge S.J."/>
            <person name="Harper J.W."/>
        </authorList>
    </citation>
    <scope>NUCLEOTIDE SEQUENCE [MRNA] (ISOFORM 2)</scope>
    <scope>VARIANT GLN-192</scope>
</reference>
<reference key="2">
    <citation type="journal article" date="2006" name="Nature">
        <title>The finished DNA sequence of human chromosome 12.</title>
        <authorList>
            <person name="Scherer S.E."/>
            <person name="Muzny D.M."/>
            <person name="Buhay C.J."/>
            <person name="Chen R."/>
            <person name="Cree A."/>
            <person name="Ding Y."/>
            <person name="Dugan-Rocha S."/>
            <person name="Gill R."/>
            <person name="Gunaratne P."/>
            <person name="Harris R.A."/>
            <person name="Hawes A.C."/>
            <person name="Hernandez J."/>
            <person name="Hodgson A.V."/>
            <person name="Hume J."/>
            <person name="Jackson A."/>
            <person name="Khan Z.M."/>
            <person name="Kovar-Smith C."/>
            <person name="Lewis L.R."/>
            <person name="Lozado R.J."/>
            <person name="Metzker M.L."/>
            <person name="Milosavljevic A."/>
            <person name="Miner G.R."/>
            <person name="Montgomery K.T."/>
            <person name="Morgan M.B."/>
            <person name="Nazareth L.V."/>
            <person name="Scott G."/>
            <person name="Sodergren E."/>
            <person name="Song X.-Z."/>
            <person name="Steffen D."/>
            <person name="Lovering R.C."/>
            <person name="Wheeler D.A."/>
            <person name="Worley K.C."/>
            <person name="Yuan Y."/>
            <person name="Zhang Z."/>
            <person name="Adams C.Q."/>
            <person name="Ansari-Lari M.A."/>
            <person name="Ayele M."/>
            <person name="Brown M.J."/>
            <person name="Chen G."/>
            <person name="Chen Z."/>
            <person name="Clerc-Blankenburg K.P."/>
            <person name="Davis C."/>
            <person name="Delgado O."/>
            <person name="Dinh H.H."/>
            <person name="Draper H."/>
            <person name="Gonzalez-Garay M.L."/>
            <person name="Havlak P."/>
            <person name="Jackson L.R."/>
            <person name="Jacob L.S."/>
            <person name="Kelly S.H."/>
            <person name="Li L."/>
            <person name="Li Z."/>
            <person name="Liu J."/>
            <person name="Liu W."/>
            <person name="Lu J."/>
            <person name="Maheshwari M."/>
            <person name="Nguyen B.-V."/>
            <person name="Okwuonu G.O."/>
            <person name="Pasternak S."/>
            <person name="Perez L.M."/>
            <person name="Plopper F.J.H."/>
            <person name="Santibanez J."/>
            <person name="Shen H."/>
            <person name="Tabor P.E."/>
            <person name="Verduzco D."/>
            <person name="Waldron L."/>
            <person name="Wang Q."/>
            <person name="Williams G.A."/>
            <person name="Zhang J."/>
            <person name="Zhou J."/>
            <person name="Allen C.C."/>
            <person name="Amin A.G."/>
            <person name="Anyalebechi V."/>
            <person name="Bailey M."/>
            <person name="Barbaria J.A."/>
            <person name="Bimage K.E."/>
            <person name="Bryant N.P."/>
            <person name="Burch P.E."/>
            <person name="Burkett C.E."/>
            <person name="Burrell K.L."/>
            <person name="Calderon E."/>
            <person name="Cardenas V."/>
            <person name="Carter K."/>
            <person name="Casias K."/>
            <person name="Cavazos I."/>
            <person name="Cavazos S.R."/>
            <person name="Ceasar H."/>
            <person name="Chacko J."/>
            <person name="Chan S.N."/>
            <person name="Chavez D."/>
            <person name="Christopoulos C."/>
            <person name="Chu J."/>
            <person name="Cockrell R."/>
            <person name="Cox C.D."/>
            <person name="Dang M."/>
            <person name="Dathorne S.R."/>
            <person name="David R."/>
            <person name="Davis C.M."/>
            <person name="Davy-Carroll L."/>
            <person name="Deshazo D.R."/>
            <person name="Donlin J.E."/>
            <person name="D'Souza L."/>
            <person name="Eaves K.A."/>
            <person name="Egan A."/>
            <person name="Emery-Cohen A.J."/>
            <person name="Escotto M."/>
            <person name="Flagg N."/>
            <person name="Forbes L.D."/>
            <person name="Gabisi A.M."/>
            <person name="Garza M."/>
            <person name="Hamilton C."/>
            <person name="Henderson N."/>
            <person name="Hernandez O."/>
            <person name="Hines S."/>
            <person name="Hogues M.E."/>
            <person name="Huang M."/>
            <person name="Idlebird D.G."/>
            <person name="Johnson R."/>
            <person name="Jolivet A."/>
            <person name="Jones S."/>
            <person name="Kagan R."/>
            <person name="King L.M."/>
            <person name="Leal B."/>
            <person name="Lebow H."/>
            <person name="Lee S."/>
            <person name="LeVan J.M."/>
            <person name="Lewis L.C."/>
            <person name="London P."/>
            <person name="Lorensuhewa L.M."/>
            <person name="Loulseged H."/>
            <person name="Lovett D.A."/>
            <person name="Lucier A."/>
            <person name="Lucier R.L."/>
            <person name="Ma J."/>
            <person name="Madu R.C."/>
            <person name="Mapua P."/>
            <person name="Martindale A.D."/>
            <person name="Martinez E."/>
            <person name="Massey E."/>
            <person name="Mawhiney S."/>
            <person name="Meador M.G."/>
            <person name="Mendez S."/>
            <person name="Mercado C."/>
            <person name="Mercado I.C."/>
            <person name="Merritt C.E."/>
            <person name="Miner Z.L."/>
            <person name="Minja E."/>
            <person name="Mitchell T."/>
            <person name="Mohabbat F."/>
            <person name="Mohabbat K."/>
            <person name="Montgomery B."/>
            <person name="Moore N."/>
            <person name="Morris S."/>
            <person name="Munidasa M."/>
            <person name="Ngo R.N."/>
            <person name="Nguyen N.B."/>
            <person name="Nickerson E."/>
            <person name="Nwaokelemeh O.O."/>
            <person name="Nwokenkwo S."/>
            <person name="Obregon M."/>
            <person name="Oguh M."/>
            <person name="Oragunye N."/>
            <person name="Oviedo R.J."/>
            <person name="Parish B.J."/>
            <person name="Parker D.N."/>
            <person name="Parrish J."/>
            <person name="Parks K.L."/>
            <person name="Paul H.A."/>
            <person name="Payton B.A."/>
            <person name="Perez A."/>
            <person name="Perrin W."/>
            <person name="Pickens A."/>
            <person name="Primus E.L."/>
            <person name="Pu L.-L."/>
            <person name="Puazo M."/>
            <person name="Quiles M.M."/>
            <person name="Quiroz J.B."/>
            <person name="Rabata D."/>
            <person name="Reeves K."/>
            <person name="Ruiz S.J."/>
            <person name="Shao H."/>
            <person name="Sisson I."/>
            <person name="Sonaike T."/>
            <person name="Sorelle R.P."/>
            <person name="Sutton A.E."/>
            <person name="Svatek A.F."/>
            <person name="Svetz L.A."/>
            <person name="Tamerisa K.S."/>
            <person name="Taylor T.R."/>
            <person name="Teague B."/>
            <person name="Thomas N."/>
            <person name="Thorn R.D."/>
            <person name="Trejos Z.Y."/>
            <person name="Trevino B.K."/>
            <person name="Ukegbu O.N."/>
            <person name="Urban J.B."/>
            <person name="Vasquez L.I."/>
            <person name="Vera V.A."/>
            <person name="Villasana D.M."/>
            <person name="Wang L."/>
            <person name="Ward-Moore S."/>
            <person name="Warren J.T."/>
            <person name="Wei X."/>
            <person name="White F."/>
            <person name="Williamson A.L."/>
            <person name="Wleczyk R."/>
            <person name="Wooden H.S."/>
            <person name="Wooden S.H."/>
            <person name="Yen J."/>
            <person name="Yoon L."/>
            <person name="Yoon V."/>
            <person name="Zorrilla S.E."/>
            <person name="Nelson D."/>
            <person name="Kucherlapati R."/>
            <person name="Weinstock G."/>
            <person name="Gibbs R.A."/>
        </authorList>
    </citation>
    <scope>NUCLEOTIDE SEQUENCE [LARGE SCALE GENOMIC DNA]</scope>
</reference>
<reference key="3">
    <citation type="journal article" date="2004" name="Genome Res.">
        <title>The status, quality, and expansion of the NIH full-length cDNA project: the Mammalian Gene Collection (MGC).</title>
        <authorList>
            <consortium name="The MGC Project Team"/>
        </authorList>
    </citation>
    <scope>NUCLEOTIDE SEQUENCE [LARGE SCALE MRNA] (ISOFORM 1)</scope>
    <scope>VARIANT GLN-192</scope>
    <source>
        <tissue>Brain</tissue>
    </source>
</reference>
<reference key="4">
    <citation type="journal article" date="2002" name="Proc. Natl. Acad. Sci. U.S.A.">
        <title>CUL7: a DOC domain-containing cullin selectively binds Skp1.Fbx29 to form an SCF-like complex.</title>
        <authorList>
            <person name="Dias D.C."/>
            <person name="Dolios G."/>
            <person name="Wang R."/>
            <person name="Pan Z.Q."/>
        </authorList>
    </citation>
    <scope>IDENTIFICATION IN SCF-LIKE COMPLEX</scope>
</reference>
<reference key="5">
    <citation type="journal article" date="2003" name="Proc. Natl. Acad. Sci. U.S.A.">
        <title>Targeted disruption of p185/Cul7 gene results in abnormal vascular morphogenesis.</title>
        <authorList>
            <person name="Arai T."/>
            <person name="Kasper J.S."/>
            <person name="Skaar J.R."/>
            <person name="Ali S.H."/>
            <person name="Takahashi C."/>
            <person name="DeCaprio J.A."/>
        </authorList>
    </citation>
    <scope>IDENTIFICATION IN A COMPLEX WITH CUL7; SKP1; RBX1 AND GLMN</scope>
</reference>
<reference key="6">
    <citation type="journal article" date="2006" name="PLoS ONE">
        <title>A critical role for FBXW8 and MAPK in cyclin D1 degradation and cancer cell proliferation.</title>
        <authorList>
            <person name="Okabe H."/>
            <person name="Lee S.H."/>
            <person name="Phuchareon J."/>
            <person name="Albertson D.G."/>
            <person name="McCormick F."/>
            <person name="Tetsu O."/>
        </authorList>
    </citation>
    <scope>FUNCTION</scope>
    <scope>PATHWAY</scope>
    <scope>IDENTIFICATION IN SCF-LIKE COMPLEX</scope>
    <scope>SUBCELLULAR LOCATION</scope>
</reference>
<reference key="7">
    <citation type="journal article" date="2007" name="Cancer Res.">
        <title>PARC and CUL7 form atypical cullin RING ligase complexes.</title>
        <authorList>
            <person name="Skaar J.R."/>
            <person name="Florens L."/>
            <person name="Tsutsumi T."/>
            <person name="Arai T."/>
            <person name="Tron A."/>
            <person name="Swanson S.K."/>
            <person name="Washburn M.P."/>
            <person name="DeCaprio J.A."/>
        </authorList>
    </citation>
    <scope>INTERACTION WITH CUL7</scope>
</reference>
<reference key="8">
    <citation type="journal article" date="2008" name="Mol. Cell">
        <title>The CUL7 E3 ubiquitin ligase targets insulin receptor substrate 1 for ubiquitin-dependent degradation.</title>
        <authorList>
            <person name="Xu X."/>
            <person name="Sarikas A."/>
            <person name="Dias-Santagata D.C."/>
            <person name="Dolios G."/>
            <person name="Lafontant P.J."/>
            <person name="Tsai S.C."/>
            <person name="Zhu W."/>
            <person name="Nakajima H."/>
            <person name="Nakajima H.O."/>
            <person name="Field L.J."/>
            <person name="Wang R."/>
            <person name="Pan Z.Q."/>
        </authorList>
    </citation>
    <scope>FUNCTION</scope>
    <scope>PATHWAY</scope>
</reference>
<reference key="9">
    <citation type="journal article" date="2011" name="PLoS Biol.">
        <title>An OBSL1-Cul7Fbxw8 ubiquitin ligase signaling mechanism regulates Golgi morphology and dendrite patterning.</title>
        <authorList>
            <person name="Litterman N."/>
            <person name="Ikeuchi Y."/>
            <person name="Gallardo G."/>
            <person name="O'Connell B.C."/>
            <person name="Sowa M.E."/>
            <person name="Gygi S.P."/>
            <person name="Harper J.W."/>
            <person name="Bonni A."/>
        </authorList>
    </citation>
    <scope>FUNCTION</scope>
    <scope>INTERACTION WITH OBSL1; CUL1; CUL2; CUL7; SKP1; CCT6B; PFDN5; CCT2; CCT3; CCT6A; CCT7; VBP1; CCDC8; ARF1; TRIP13; PDCD5 AND GORASP1</scope>
    <scope>SUBCELLULAR LOCATION</scope>
</reference>
<reference key="10">
    <citation type="journal article" date="2012" name="Proc. Natl. Acad. Sci. U.S.A.">
        <title>N-terminal acetylome analyses and functional insights of the N-terminal acetyltransferase NatB.</title>
        <authorList>
            <person name="Van Damme P."/>
            <person name="Lasa M."/>
            <person name="Polevoda B."/>
            <person name="Gazquez C."/>
            <person name="Elosegui-Artola A."/>
            <person name="Kim D.S."/>
            <person name="De Juan-Pardo E."/>
            <person name="Demeyer K."/>
            <person name="Hole K."/>
            <person name="Larrea E."/>
            <person name="Timmerman E."/>
            <person name="Prieto J."/>
            <person name="Arnesen T."/>
            <person name="Sherman F."/>
            <person name="Gevaert K."/>
            <person name="Aldabe R."/>
        </authorList>
    </citation>
    <scope>ACETYLATION [LARGE SCALE ANALYSIS] AT MET-1</scope>
    <scope>IDENTIFICATION BY MASS SPECTROMETRY [LARGE SCALE ANALYSIS]</scope>
</reference>
<reference key="11">
    <citation type="journal article" date="2014" name="J. Biol. Chem.">
        <title>The CUL7/F-box and WD repeat domain containing 8 (CUL7/Fbxw8) ubiquitin ligase promotes degradation of hematopoietic progenitor kinase 1.</title>
        <authorList>
            <person name="Wang H."/>
            <person name="Chen Y."/>
            <person name="Lin P."/>
            <person name="Li L."/>
            <person name="Zhou G."/>
            <person name="Liu G."/>
            <person name="Logsdon C."/>
            <person name="Jin J."/>
            <person name="Abbruzzese J.L."/>
            <person name="Tan T.H."/>
            <person name="Wang H."/>
        </authorList>
    </citation>
    <scope>FUNCTION</scope>
    <scope>INTERACTION WITH CUL7 AND MAP4K1</scope>
</reference>
<reference key="12">
    <citation type="journal article" date="2014" name="Mol. Cell">
        <title>The 3M complex maintains microtubule and genome integrity.</title>
        <authorList>
            <person name="Yan J."/>
            <person name="Yan F."/>
            <person name="Li Z."/>
            <person name="Sinnott B."/>
            <person name="Cappell K.M."/>
            <person name="Yu Y."/>
            <person name="Mo J."/>
            <person name="Duncan J.A."/>
            <person name="Chen X."/>
            <person name="Cormier-Daire V."/>
            <person name="Whitehurst A.W."/>
            <person name="Xiong Y."/>
        </authorList>
    </citation>
    <scope>FUNCTION</scope>
</reference>
<reference evidence="18" key="13">
    <citation type="journal article" date="2022" name="Nat. Struct. Mol. Biol.">
        <title>Structure of CRL7FBXW8 reveals coupling with CUL1-RBX1/ROC1 for multi-cullin-RING E3-catalyzed ubiquitin ligation.</title>
        <authorList>
            <person name="Hopf L.V.M."/>
            <person name="Baek K."/>
            <person name="Kluegel M."/>
            <person name="von Gronau S."/>
            <person name="Xiong Y."/>
            <person name="Schulman B.A."/>
        </authorList>
    </citation>
    <scope>STRUCTURE BY ELECTRON MICROSCOPY (2.80 ANGSTROMS) IN CUL7-RING(FBXW8) COMPLEX</scope>
    <scope>FUNCTION</scope>
    <scope>SUBUNIT</scope>
    <scope>INTERACTION WITH CUL7 AND SKP1</scope>
</reference>
<gene>
    <name evidence="15 17" type="primary">FBXW8</name>
    <name type="synonym">FBW6</name>
    <name type="synonym">FBW8</name>
    <name type="synonym">FBX29</name>
    <name type="synonym">FBXO29</name>
    <name type="synonym">FBXW6</name>
</gene>
<dbReference type="EMBL" id="AF176707">
    <property type="protein sequence ID" value="AAF03129.1"/>
    <property type="status" value="ALT_SEQ"/>
    <property type="molecule type" value="mRNA"/>
</dbReference>
<dbReference type="EMBL" id="AC026368">
    <property type="status" value="NOT_ANNOTATED_CDS"/>
    <property type="molecule type" value="Genomic_DNA"/>
</dbReference>
<dbReference type="EMBL" id="AC083806">
    <property type="status" value="NOT_ANNOTATED_CDS"/>
    <property type="molecule type" value="Genomic_DNA"/>
</dbReference>
<dbReference type="EMBL" id="AC127164">
    <property type="status" value="NOT_ANNOTATED_CDS"/>
    <property type="molecule type" value="Genomic_DNA"/>
</dbReference>
<dbReference type="EMBL" id="BC037296">
    <property type="protein sequence ID" value="AAH37296.1"/>
    <property type="molecule type" value="mRNA"/>
</dbReference>
<dbReference type="CCDS" id="CCDS44988.1">
    <molecule id="Q8N3Y1-2"/>
</dbReference>
<dbReference type="CCDS" id="CCDS9182.1">
    <molecule id="Q8N3Y1-1"/>
</dbReference>
<dbReference type="RefSeq" id="NP_036306.1">
    <molecule id="Q8N3Y1-2"/>
    <property type="nucleotide sequence ID" value="NM_012174.2"/>
</dbReference>
<dbReference type="RefSeq" id="NP_699179.2">
    <molecule id="Q8N3Y1-1"/>
    <property type="nucleotide sequence ID" value="NM_153348.2"/>
</dbReference>
<dbReference type="PDB" id="7Z8B">
    <property type="method" value="EM"/>
    <property type="resolution" value="2.80 A"/>
    <property type="chains" value="F=1-598"/>
</dbReference>
<dbReference type="PDBsum" id="7Z8B"/>
<dbReference type="EMDB" id="EMD-14547"/>
<dbReference type="SMR" id="Q8N3Y1"/>
<dbReference type="BioGRID" id="117645">
    <property type="interactions" value="155"/>
</dbReference>
<dbReference type="ComplexPortal" id="CPX-7784">
    <property type="entry name" value="SCF E3 ubiquitin ligase complex, FBXW8-CUL7 variant"/>
</dbReference>
<dbReference type="CORUM" id="Q8N3Y1"/>
<dbReference type="DIP" id="DIP-37970N"/>
<dbReference type="FunCoup" id="Q8N3Y1">
    <property type="interactions" value="1960"/>
</dbReference>
<dbReference type="IntAct" id="Q8N3Y1">
    <property type="interactions" value="50"/>
</dbReference>
<dbReference type="MINT" id="Q8N3Y1"/>
<dbReference type="STRING" id="9606.ENSP00000498999"/>
<dbReference type="GlyGen" id="Q8N3Y1">
    <property type="glycosylation" value="1 site, 1 O-linked glycan (1 site)"/>
</dbReference>
<dbReference type="iPTMnet" id="Q8N3Y1"/>
<dbReference type="PhosphoSitePlus" id="Q8N3Y1"/>
<dbReference type="BioMuta" id="FBXW8"/>
<dbReference type="DMDM" id="296434513"/>
<dbReference type="jPOST" id="Q8N3Y1"/>
<dbReference type="MassIVE" id="Q8N3Y1"/>
<dbReference type="PaxDb" id="9606-ENSP00000310686"/>
<dbReference type="PeptideAtlas" id="Q8N3Y1"/>
<dbReference type="ProteomicsDB" id="71847">
    <molecule id="Q8N3Y1-1"/>
</dbReference>
<dbReference type="ProteomicsDB" id="71848">
    <molecule id="Q8N3Y1-2"/>
</dbReference>
<dbReference type="Pumba" id="Q8N3Y1"/>
<dbReference type="Antibodypedia" id="31322">
    <property type="antibodies" value="146 antibodies from 21 providers"/>
</dbReference>
<dbReference type="DNASU" id="26259"/>
<dbReference type="Ensembl" id="ENST00000455858.2">
    <molecule id="Q8N3Y1-2"/>
    <property type="protein sequence ID" value="ENSP00000389144.2"/>
    <property type="gene ID" value="ENSG00000174989.14"/>
</dbReference>
<dbReference type="Ensembl" id="ENST00000652555.1">
    <molecule id="Q8N3Y1-1"/>
    <property type="protein sequence ID" value="ENSP00000498999.1"/>
    <property type="gene ID" value="ENSG00000174989.14"/>
</dbReference>
<dbReference type="GeneID" id="26259"/>
<dbReference type="KEGG" id="hsa:26259"/>
<dbReference type="MANE-Select" id="ENST00000652555.1">
    <property type="protein sequence ID" value="ENSP00000498999.1"/>
    <property type="RefSeq nucleotide sequence ID" value="NM_153348.3"/>
    <property type="RefSeq protein sequence ID" value="NP_699179.2"/>
</dbReference>
<dbReference type="UCSC" id="uc001twf.2">
    <molecule id="Q8N3Y1-1"/>
    <property type="organism name" value="human"/>
</dbReference>
<dbReference type="AGR" id="HGNC:13597"/>
<dbReference type="CTD" id="26259"/>
<dbReference type="DisGeNET" id="26259"/>
<dbReference type="GeneCards" id="FBXW8"/>
<dbReference type="HGNC" id="HGNC:13597">
    <property type="gene designation" value="FBXW8"/>
</dbReference>
<dbReference type="HPA" id="ENSG00000174989">
    <property type="expression patterns" value="Low tissue specificity"/>
</dbReference>
<dbReference type="MIM" id="609073">
    <property type="type" value="gene"/>
</dbReference>
<dbReference type="neXtProt" id="NX_Q8N3Y1"/>
<dbReference type="OpenTargets" id="ENSG00000174989"/>
<dbReference type="PharmGKB" id="PA28039"/>
<dbReference type="VEuPathDB" id="HostDB:ENSG00000174989"/>
<dbReference type="eggNOG" id="KOG0274">
    <property type="taxonomic scope" value="Eukaryota"/>
</dbReference>
<dbReference type="GeneTree" id="ENSGT00390000017221"/>
<dbReference type="HOGENOM" id="CLU_024087_1_0_1"/>
<dbReference type="InParanoid" id="Q8N3Y1"/>
<dbReference type="OMA" id="LVFQECR"/>
<dbReference type="OrthoDB" id="190105at2759"/>
<dbReference type="PAN-GO" id="Q8N3Y1">
    <property type="GO annotations" value="2 GO annotations based on evolutionary models"/>
</dbReference>
<dbReference type="PhylomeDB" id="Q8N3Y1"/>
<dbReference type="TreeFam" id="TF332593"/>
<dbReference type="PathwayCommons" id="Q8N3Y1"/>
<dbReference type="Reactome" id="R-HSA-8951664">
    <property type="pathway name" value="Neddylation"/>
</dbReference>
<dbReference type="Reactome" id="R-HSA-983168">
    <property type="pathway name" value="Antigen processing: Ubiquitination &amp; Proteasome degradation"/>
</dbReference>
<dbReference type="SignaLink" id="Q8N3Y1"/>
<dbReference type="SIGNOR" id="Q8N3Y1"/>
<dbReference type="UniPathway" id="UPA00143"/>
<dbReference type="BioGRID-ORCS" id="26259">
    <property type="hits" value="9 hits in 1193 CRISPR screens"/>
</dbReference>
<dbReference type="ChiTaRS" id="FBXW8">
    <property type="organism name" value="human"/>
</dbReference>
<dbReference type="GeneWiki" id="FBXW8"/>
<dbReference type="GenomeRNAi" id="26259"/>
<dbReference type="Pharos" id="Q8N3Y1">
    <property type="development level" value="Tbio"/>
</dbReference>
<dbReference type="PRO" id="PR:Q8N3Y1"/>
<dbReference type="Proteomes" id="UP000005640">
    <property type="component" value="Chromosome 12"/>
</dbReference>
<dbReference type="RNAct" id="Q8N3Y1">
    <property type="molecule type" value="protein"/>
</dbReference>
<dbReference type="Bgee" id="ENSG00000174989">
    <property type="expression patterns" value="Expressed in stromal cell of endometrium and 108 other cell types or tissues"/>
</dbReference>
<dbReference type="ExpressionAtlas" id="Q8N3Y1">
    <property type="expression patterns" value="baseline and differential"/>
</dbReference>
<dbReference type="GO" id="GO:0005814">
    <property type="term" value="C:centriole"/>
    <property type="evidence" value="ECO:0000318"/>
    <property type="project" value="GO_Central"/>
</dbReference>
<dbReference type="GO" id="GO:0036064">
    <property type="term" value="C:ciliary basal body"/>
    <property type="evidence" value="ECO:0000318"/>
    <property type="project" value="GO_Central"/>
</dbReference>
<dbReference type="GO" id="GO:0031467">
    <property type="term" value="C:Cul7-RING ubiquitin ligase complex"/>
    <property type="evidence" value="ECO:0000314"/>
    <property type="project" value="UniProtKB"/>
</dbReference>
<dbReference type="GO" id="GO:0005737">
    <property type="term" value="C:cytoplasm"/>
    <property type="evidence" value="ECO:0000314"/>
    <property type="project" value="UniProtKB"/>
</dbReference>
<dbReference type="GO" id="GO:0005829">
    <property type="term" value="C:cytosol"/>
    <property type="evidence" value="ECO:0000314"/>
    <property type="project" value="HPA"/>
</dbReference>
<dbReference type="GO" id="GO:0005794">
    <property type="term" value="C:Golgi apparatus"/>
    <property type="evidence" value="ECO:0000314"/>
    <property type="project" value="UniProtKB"/>
</dbReference>
<dbReference type="GO" id="GO:0048471">
    <property type="term" value="C:perinuclear region of cytoplasm"/>
    <property type="evidence" value="ECO:0000314"/>
    <property type="project" value="UniProtKB"/>
</dbReference>
<dbReference type="GO" id="GO:0019005">
    <property type="term" value="C:SCF ubiquitin ligase complex"/>
    <property type="evidence" value="ECO:0007669"/>
    <property type="project" value="Ensembl"/>
</dbReference>
<dbReference type="GO" id="GO:1990756">
    <property type="term" value="F:ubiquitin-like ligase-substrate adaptor activity"/>
    <property type="evidence" value="ECO:0000314"/>
    <property type="project" value="UniProtKB"/>
</dbReference>
<dbReference type="GO" id="GO:0008283">
    <property type="term" value="P:cell population proliferation"/>
    <property type="evidence" value="ECO:0000314"/>
    <property type="project" value="UniProtKB"/>
</dbReference>
<dbReference type="GO" id="GO:0060271">
    <property type="term" value="P:cilium assembly"/>
    <property type="evidence" value="ECO:0000318"/>
    <property type="project" value="GO_Central"/>
</dbReference>
<dbReference type="GO" id="GO:0007030">
    <property type="term" value="P:Golgi organization"/>
    <property type="evidence" value="ECO:0000316"/>
    <property type="project" value="UniProtKB"/>
</dbReference>
<dbReference type="GO" id="GO:0060716">
    <property type="term" value="P:labyrinthine layer blood vessel development"/>
    <property type="evidence" value="ECO:0007669"/>
    <property type="project" value="Ensembl"/>
</dbReference>
<dbReference type="GO" id="GO:0046627">
    <property type="term" value="P:negative regulation of insulin receptor signaling pathway"/>
    <property type="evidence" value="ECO:0000314"/>
    <property type="project" value="UniProt"/>
</dbReference>
<dbReference type="GO" id="GO:0050775">
    <property type="term" value="P:positive regulation of dendrite morphogenesis"/>
    <property type="evidence" value="ECO:0000314"/>
    <property type="project" value="UniProtKB"/>
</dbReference>
<dbReference type="GO" id="GO:0032436">
    <property type="term" value="P:positive regulation of proteasomal ubiquitin-dependent protein catabolic process"/>
    <property type="evidence" value="ECO:0007669"/>
    <property type="project" value="Ensembl"/>
</dbReference>
<dbReference type="GO" id="GO:0043161">
    <property type="term" value="P:proteasome-mediated ubiquitin-dependent protein catabolic process"/>
    <property type="evidence" value="ECO:0000314"/>
    <property type="project" value="UniProtKB"/>
</dbReference>
<dbReference type="GO" id="GO:0016567">
    <property type="term" value="P:protein ubiquitination"/>
    <property type="evidence" value="ECO:0000314"/>
    <property type="project" value="UniProtKB"/>
</dbReference>
<dbReference type="GO" id="GO:0006511">
    <property type="term" value="P:ubiquitin-dependent protein catabolic process"/>
    <property type="evidence" value="ECO:0000314"/>
    <property type="project" value="UniProtKB"/>
</dbReference>
<dbReference type="CDD" id="cd22134">
    <property type="entry name" value="F-box_FBXW8"/>
    <property type="match status" value="1"/>
</dbReference>
<dbReference type="FunFam" id="1.20.1280.50:FF:000025">
    <property type="entry name" value="F-box and WD repeat domain containing 8"/>
    <property type="match status" value="1"/>
</dbReference>
<dbReference type="FunFam" id="2.130.10.10:FF:000308">
    <property type="entry name" value="F-box and WD repeat domain containing 8"/>
    <property type="match status" value="1"/>
</dbReference>
<dbReference type="FunFam" id="2.130.10.10:FF:000428">
    <property type="entry name" value="F-box and WD repeat domain containing 8"/>
    <property type="match status" value="1"/>
</dbReference>
<dbReference type="Gene3D" id="1.20.1280.50">
    <property type="match status" value="1"/>
</dbReference>
<dbReference type="Gene3D" id="2.130.10.10">
    <property type="entry name" value="YVTN repeat-like/Quinoprotein amine dehydrogenase"/>
    <property type="match status" value="2"/>
</dbReference>
<dbReference type="InterPro" id="IPR036047">
    <property type="entry name" value="F-box-like_dom_sf"/>
</dbReference>
<dbReference type="InterPro" id="IPR001810">
    <property type="entry name" value="F-box_dom"/>
</dbReference>
<dbReference type="InterPro" id="IPR011047">
    <property type="entry name" value="Quinoprotein_ADH-like_sf"/>
</dbReference>
<dbReference type="InterPro" id="IPR015943">
    <property type="entry name" value="WD40/YVTN_repeat-like_dom_sf"/>
</dbReference>
<dbReference type="InterPro" id="IPR001680">
    <property type="entry name" value="WD40_rpt"/>
</dbReference>
<dbReference type="InterPro" id="IPR050505">
    <property type="entry name" value="WDR55_POC1"/>
</dbReference>
<dbReference type="PANTHER" id="PTHR44019:SF11">
    <property type="entry name" value="F-BOX_WD REPEAT-CONTAINING PROTEIN 8"/>
    <property type="match status" value="1"/>
</dbReference>
<dbReference type="PANTHER" id="PTHR44019">
    <property type="entry name" value="WD REPEAT-CONTAINING PROTEIN 55"/>
    <property type="match status" value="1"/>
</dbReference>
<dbReference type="Pfam" id="PF12937">
    <property type="entry name" value="F-box-like"/>
    <property type="match status" value="1"/>
</dbReference>
<dbReference type="SMART" id="SM00256">
    <property type="entry name" value="FBOX"/>
    <property type="match status" value="1"/>
</dbReference>
<dbReference type="SMART" id="SM00320">
    <property type="entry name" value="WD40"/>
    <property type="match status" value="5"/>
</dbReference>
<dbReference type="SUPFAM" id="SSF81383">
    <property type="entry name" value="F-box domain"/>
    <property type="match status" value="1"/>
</dbReference>
<dbReference type="SUPFAM" id="SSF50998">
    <property type="entry name" value="Quinoprotein alcohol dehydrogenase-like"/>
    <property type="match status" value="1"/>
</dbReference>
<dbReference type="PROSITE" id="PS50181">
    <property type="entry name" value="FBOX"/>
    <property type="match status" value="1"/>
</dbReference>
<dbReference type="PROSITE" id="PS00678">
    <property type="entry name" value="WD_REPEATS_1"/>
    <property type="match status" value="1"/>
</dbReference>
<dbReference type="PROSITE" id="PS50082">
    <property type="entry name" value="WD_REPEATS_2"/>
    <property type="match status" value="1"/>
</dbReference>
<dbReference type="PROSITE" id="PS50294">
    <property type="entry name" value="WD_REPEATS_REGION"/>
    <property type="match status" value="2"/>
</dbReference>
<feature type="chain" id="PRO_0000050997" description="F-box/WD repeat-containing protein 8">
    <location>
        <begin position="1"/>
        <end position="598"/>
    </location>
</feature>
<feature type="domain" description="F-box" evidence="2">
    <location>
        <begin position="113"/>
        <end position="159"/>
    </location>
</feature>
<feature type="repeat" description="WD 1" evidence="13 18">
    <location>
        <begin position="201"/>
        <end position="250"/>
    </location>
</feature>
<feature type="repeat" description="WD 2" evidence="13 18">
    <location>
        <begin position="259"/>
        <end position="299"/>
    </location>
</feature>
<feature type="repeat" description="WD 3" evidence="13 18">
    <location>
        <begin position="300"/>
        <end position="340"/>
    </location>
</feature>
<feature type="repeat" description="WD 4" evidence="13 18">
    <location>
        <begin position="341"/>
        <end position="383"/>
    </location>
</feature>
<feature type="repeat" description="WD 5" evidence="13 18">
    <location>
        <begin position="384"/>
        <end position="429"/>
    </location>
</feature>
<feature type="repeat" description="WD 6" evidence="13 18">
    <location>
        <begin position="430"/>
        <end position="475"/>
    </location>
</feature>
<feature type="repeat" description="WD 7" evidence="13 18">
    <location>
        <begin position="476"/>
        <end position="513"/>
    </location>
</feature>
<feature type="repeat" description="WD 8" evidence="13 18">
    <location>
        <begin position="514"/>
        <end position="561"/>
    </location>
</feature>
<feature type="region of interest" description="Disordered" evidence="3">
    <location>
        <begin position="17"/>
        <end position="93"/>
    </location>
</feature>
<feature type="compositionally biased region" description="Basic and acidic residues" evidence="3">
    <location>
        <begin position="29"/>
        <end position="40"/>
    </location>
</feature>
<feature type="compositionally biased region" description="Low complexity" evidence="3">
    <location>
        <begin position="61"/>
        <end position="71"/>
    </location>
</feature>
<feature type="modified residue" description="N-acetylmethionine" evidence="19">
    <location>
        <position position="1"/>
    </location>
</feature>
<feature type="modified residue" description="Phosphoserine" evidence="1">
    <location>
        <position position="83"/>
    </location>
</feature>
<feature type="modified residue" description="Phosphoserine" evidence="1">
    <location>
        <position position="85"/>
    </location>
</feature>
<feature type="splice variant" id="VSP_008501" description="In isoform 2." evidence="14">
    <location>
        <begin position="41"/>
        <end position="106"/>
    </location>
</feature>
<feature type="sequence variant" id="VAR_060326" description="In dbSNP:rs4076700." evidence="4 6">
    <original>R</original>
    <variation>Q</variation>
    <location>
        <position position="192"/>
    </location>
</feature>
<feature type="sequence variant" id="VAR_057597" description="In dbSNP:rs36021180.">
    <original>T</original>
    <variation>A</variation>
    <location>
        <position position="211"/>
    </location>
</feature>
<feature type="sequence variant" id="VAR_057598" description="In dbSNP:rs3741466.">
    <original>T</original>
    <variation>M</variation>
    <location>
        <position position="536"/>
    </location>
</feature>
<feature type="sequence variant" id="VAR_062096" description="In dbSNP:rs56350562.">
    <original>V</original>
    <variation>M</variation>
    <location>
        <position position="563"/>
    </location>
</feature>
<feature type="sequence conflict" description="In Ref. 3; AAH37296." evidence="16" ref="3">
    <original>G</original>
    <variation>S</variation>
    <location>
        <position position="46"/>
    </location>
</feature>
<feature type="sequence conflict" description="In Ref. 3; AAH37296." evidence="16" ref="3">
    <original>R</original>
    <variation>G</variation>
    <location>
        <position position="58"/>
    </location>
</feature>
<feature type="sequence conflict" description="In Ref. 3; AAH37296." evidence="16" ref="3">
    <original>L</original>
    <variation>I</variation>
    <location>
        <position position="380"/>
    </location>
</feature>
<feature type="sequence conflict" description="In Ref. 1; AAF03129." evidence="16" ref="1">
    <original>E</original>
    <variation>K</variation>
    <location>
        <position position="510"/>
    </location>
</feature>
<feature type="helix" evidence="20">
    <location>
        <begin position="122"/>
        <end position="129"/>
    </location>
</feature>
<feature type="helix" evidence="20">
    <location>
        <begin position="133"/>
        <end position="136"/>
    </location>
</feature>
<feature type="helix" evidence="20">
    <location>
        <begin position="139"/>
        <end position="141"/>
    </location>
</feature>
<feature type="helix" evidence="20">
    <location>
        <begin position="144"/>
        <end position="150"/>
    </location>
</feature>
<feature type="helix" evidence="20">
    <location>
        <begin position="153"/>
        <end position="163"/>
    </location>
</feature>
<feature type="turn" evidence="20">
    <location>
        <begin position="171"/>
        <end position="173"/>
    </location>
</feature>
<feature type="helix" evidence="20">
    <location>
        <begin position="177"/>
        <end position="196"/>
    </location>
</feature>
<feature type="strand" evidence="20">
    <location>
        <begin position="200"/>
        <end position="204"/>
    </location>
</feature>
<feature type="strand" evidence="20">
    <location>
        <begin position="213"/>
        <end position="227"/>
    </location>
</feature>
<feature type="strand" evidence="20">
    <location>
        <begin position="232"/>
        <end position="236"/>
    </location>
</feature>
<feature type="strand" evidence="20">
    <location>
        <begin position="239"/>
        <end position="241"/>
    </location>
</feature>
<feature type="strand" evidence="20">
    <location>
        <begin position="262"/>
        <end position="267"/>
    </location>
</feature>
<feature type="strand" evidence="20">
    <location>
        <begin position="269"/>
        <end position="276"/>
    </location>
</feature>
<feature type="strand" evidence="20">
    <location>
        <begin position="279"/>
        <end position="285"/>
    </location>
</feature>
<feature type="turn" evidence="20">
    <location>
        <begin position="286"/>
        <end position="288"/>
    </location>
</feature>
<feature type="strand" evidence="20">
    <location>
        <begin position="293"/>
        <end position="297"/>
    </location>
</feature>
<feature type="strand" evidence="20">
    <location>
        <begin position="304"/>
        <end position="307"/>
    </location>
</feature>
<feature type="strand" evidence="20">
    <location>
        <begin position="309"/>
        <end position="312"/>
    </location>
</feature>
<feature type="strand" evidence="20">
    <location>
        <begin position="314"/>
        <end position="317"/>
    </location>
</feature>
<feature type="strand" evidence="20">
    <location>
        <begin position="319"/>
        <end position="326"/>
    </location>
</feature>
<feature type="strand" evidence="20">
    <location>
        <begin position="334"/>
        <end position="340"/>
    </location>
</feature>
<feature type="strand" evidence="20">
    <location>
        <begin position="348"/>
        <end position="350"/>
    </location>
</feature>
<feature type="strand" evidence="20">
    <location>
        <begin position="355"/>
        <end position="357"/>
    </location>
</feature>
<feature type="strand" evidence="20">
    <location>
        <begin position="359"/>
        <end position="364"/>
    </location>
</feature>
<feature type="strand" evidence="20">
    <location>
        <begin position="367"/>
        <end position="372"/>
    </location>
</feature>
<feature type="turn" evidence="20">
    <location>
        <begin position="373"/>
        <end position="376"/>
    </location>
</feature>
<feature type="strand" evidence="20">
    <location>
        <begin position="377"/>
        <end position="382"/>
    </location>
</feature>
<feature type="strand" evidence="20">
    <location>
        <begin position="384"/>
        <end position="386"/>
    </location>
</feature>
<feature type="strand" evidence="20">
    <location>
        <begin position="388"/>
        <end position="393"/>
    </location>
</feature>
<feature type="strand" evidence="20">
    <location>
        <begin position="395"/>
        <end position="402"/>
    </location>
</feature>
<feature type="turn" evidence="20">
    <location>
        <begin position="406"/>
        <end position="409"/>
    </location>
</feature>
<feature type="strand" evidence="20">
    <location>
        <begin position="413"/>
        <end position="418"/>
    </location>
</feature>
<feature type="turn" evidence="20">
    <location>
        <begin position="419"/>
        <end position="421"/>
    </location>
</feature>
<feature type="strand" evidence="20">
    <location>
        <begin position="424"/>
        <end position="428"/>
    </location>
</feature>
<feature type="strand" evidence="20">
    <location>
        <begin position="435"/>
        <end position="439"/>
    </location>
</feature>
<feature type="strand" evidence="20">
    <location>
        <begin position="441"/>
        <end position="443"/>
    </location>
</feature>
<feature type="strand" evidence="20">
    <location>
        <begin position="447"/>
        <end position="452"/>
    </location>
</feature>
<feature type="strand" evidence="20">
    <location>
        <begin position="455"/>
        <end position="461"/>
    </location>
</feature>
<feature type="turn" evidence="20">
    <location>
        <begin position="462"/>
        <end position="464"/>
    </location>
</feature>
<feature type="strand" evidence="20">
    <location>
        <begin position="467"/>
        <end position="472"/>
    </location>
</feature>
<feature type="strand" evidence="20">
    <location>
        <begin position="478"/>
        <end position="483"/>
    </location>
</feature>
<feature type="strand" evidence="20">
    <location>
        <begin position="488"/>
        <end position="492"/>
    </location>
</feature>
<feature type="strand" evidence="20">
    <location>
        <begin position="495"/>
        <end position="501"/>
    </location>
</feature>
<feature type="turn" evidence="20">
    <location>
        <begin position="502"/>
        <end position="505"/>
    </location>
</feature>
<feature type="strand" evidence="20">
    <location>
        <begin position="506"/>
        <end position="512"/>
    </location>
</feature>
<feature type="strand" evidence="20">
    <location>
        <begin position="517"/>
        <end position="523"/>
    </location>
</feature>
<feature type="strand" evidence="20">
    <location>
        <begin position="526"/>
        <end position="531"/>
    </location>
</feature>
<feature type="strand" evidence="20">
    <location>
        <begin position="555"/>
        <end position="561"/>
    </location>
</feature>
<feature type="helix" evidence="20">
    <location>
        <begin position="563"/>
        <end position="565"/>
    </location>
</feature>
<feature type="strand" evidence="20">
    <location>
        <begin position="567"/>
        <end position="569"/>
    </location>
</feature>
<feature type="strand" evidence="20">
    <location>
        <begin position="571"/>
        <end position="575"/>
    </location>
</feature>
<feature type="helix" evidence="20">
    <location>
        <begin position="580"/>
        <end position="592"/>
    </location>
</feature>
<evidence type="ECO:0000250" key="1">
    <source>
        <dbReference type="UniProtKB" id="Q8BIA4"/>
    </source>
</evidence>
<evidence type="ECO:0000255" key="2">
    <source>
        <dbReference type="PROSITE-ProRule" id="PRU00080"/>
    </source>
</evidence>
<evidence type="ECO:0000256" key="3">
    <source>
        <dbReference type="SAM" id="MobiDB-lite"/>
    </source>
</evidence>
<evidence type="ECO:0000269" key="4">
    <source>
    </source>
</evidence>
<evidence type="ECO:0000269" key="5">
    <source>
    </source>
</evidence>
<evidence type="ECO:0000269" key="6">
    <source>
    </source>
</evidence>
<evidence type="ECO:0000269" key="7">
    <source>
    </source>
</evidence>
<evidence type="ECO:0000269" key="8">
    <source>
    </source>
</evidence>
<evidence type="ECO:0000269" key="9">
    <source>
    </source>
</evidence>
<evidence type="ECO:0000269" key="10">
    <source>
    </source>
</evidence>
<evidence type="ECO:0000269" key="11">
    <source>
    </source>
</evidence>
<evidence type="ECO:0000269" key="12">
    <source>
    </source>
</evidence>
<evidence type="ECO:0000269" key="13">
    <source>
    </source>
</evidence>
<evidence type="ECO:0000303" key="14">
    <source>
    </source>
</evidence>
<evidence type="ECO:0000303" key="15">
    <source>
    </source>
</evidence>
<evidence type="ECO:0000305" key="16"/>
<evidence type="ECO:0000312" key="17">
    <source>
        <dbReference type="HGNC" id="HGNC:13597"/>
    </source>
</evidence>
<evidence type="ECO:0007744" key="18">
    <source>
        <dbReference type="PDB" id="7Z8B"/>
    </source>
</evidence>
<evidence type="ECO:0007744" key="19">
    <source>
    </source>
</evidence>
<evidence type="ECO:0007829" key="20">
    <source>
        <dbReference type="PDB" id="7Z8B"/>
    </source>
</evidence>
<proteinExistence type="evidence at protein level"/>
<accession>Q8N3Y1</accession>
<accession>Q9UK95</accession>
<sequence>MDDYSLDEFRRRWQEELAQAQAPKKRRRPEAAERRARRPEVGSGRGEQASGDPALAQRLLEGAGRPPAARATRAEGQDVASRSRSPLAREGAGGGEQLVDQLIRDLNEMNDVPFFDIQLPYELAINIFQYLDRKELGRCAQVSKTWKVIAEDEVLWYRLCQQEGHLPDSSISDYSCWKLIFQECRAKEHMLRTNWKNRKGAVSELEHVPDTVLCDVHSHDGVVIAGYTSGDVRVWDTRTWDYVAPFLESEDEEDEPGMQPNVSFVRINSSLAVAAYEDGFLNIWDLRTGKYPVHRFEHDARIQALALSQDDATVATASAFDVVMLSPNEEGYWQIAAEFEVPKLVQYLEIVPETRRYPVAVAAAGDLMYLLKAEDSARTLLYAHGPPVTCLDVSANQVAFGVQGLGWVYEGSKILVYSLEAGRRLLKLGNVLRDFTCVNLSDSPPNLMVSGNMDGRVRIHDLRSGNIALSLSAHQLRVSAVQMDDWKIVSGGEEGLVSVWDYRMNQKLWEVYSGHPVQHISFSSHSLITANVPYQTVMRNADLDSFTTHRRHRGLIRAYEFAVDQLAFQSPLPVCRSSCDAMATHYYDLALAFPYNHV</sequence>
<protein>
    <recommendedName>
        <fullName>F-box/WD repeat-containing protein 8</fullName>
    </recommendedName>
    <alternativeName>
        <fullName>F-box and WD-40 domain-containing protein 8</fullName>
    </alternativeName>
    <alternativeName>
        <fullName>F-box only protein 29</fullName>
    </alternativeName>
</protein>